<gene>
    <name type="ordered locus">YGR270C-A</name>
</gene>
<reference key="1">
    <citation type="journal article" date="1997" name="Nature">
        <title>The nucleotide sequence of Saccharomyces cerevisiae chromosome VII.</title>
        <authorList>
            <person name="Tettelin H."/>
            <person name="Agostoni-Carbone M.L."/>
            <person name="Albermann K."/>
            <person name="Albers M."/>
            <person name="Arroyo J."/>
            <person name="Backes U."/>
            <person name="Barreiros T."/>
            <person name="Bertani I."/>
            <person name="Bjourson A.J."/>
            <person name="Brueckner M."/>
            <person name="Bruschi C.V."/>
            <person name="Carignani G."/>
            <person name="Castagnoli L."/>
            <person name="Cerdan E."/>
            <person name="Clemente M.L."/>
            <person name="Coblenz A."/>
            <person name="Coglievina M."/>
            <person name="Coissac E."/>
            <person name="Defoor E."/>
            <person name="Del Bino S."/>
            <person name="Delius H."/>
            <person name="Delneri D."/>
            <person name="de Wergifosse P."/>
            <person name="Dujon B."/>
            <person name="Durand P."/>
            <person name="Entian K.-D."/>
            <person name="Eraso P."/>
            <person name="Escribano V."/>
            <person name="Fabiani L."/>
            <person name="Fartmann B."/>
            <person name="Feroli F."/>
            <person name="Feuermann M."/>
            <person name="Frontali L."/>
            <person name="Garcia-Gonzalez M."/>
            <person name="Garcia-Saez M.I."/>
            <person name="Goffeau A."/>
            <person name="Guerreiro P."/>
            <person name="Hani J."/>
            <person name="Hansen M."/>
            <person name="Hebling U."/>
            <person name="Hernandez K."/>
            <person name="Heumann K."/>
            <person name="Hilger F."/>
            <person name="Hofmann B."/>
            <person name="Indge K.J."/>
            <person name="James C.M."/>
            <person name="Klima R."/>
            <person name="Koetter P."/>
            <person name="Kramer B."/>
            <person name="Kramer W."/>
            <person name="Lauquin G."/>
            <person name="Leuther H."/>
            <person name="Louis E.J."/>
            <person name="Maillier E."/>
            <person name="Marconi A."/>
            <person name="Martegani E."/>
            <person name="Mazon M.J."/>
            <person name="Mazzoni C."/>
            <person name="McReynolds A.D.K."/>
            <person name="Melchioretto P."/>
            <person name="Mewes H.-W."/>
            <person name="Minenkova O."/>
            <person name="Mueller-Auer S."/>
            <person name="Nawrocki A."/>
            <person name="Netter P."/>
            <person name="Neu R."/>
            <person name="Nombela C."/>
            <person name="Oliver S.G."/>
            <person name="Panzeri L."/>
            <person name="Paoluzi S."/>
            <person name="Plevani P."/>
            <person name="Portetelle D."/>
            <person name="Portillo F."/>
            <person name="Potier S."/>
            <person name="Purnelle B."/>
            <person name="Rieger M."/>
            <person name="Riles L."/>
            <person name="Rinaldi T."/>
            <person name="Robben J."/>
            <person name="Rodrigues-Pousada C."/>
            <person name="Rodriguez-Belmonte E."/>
            <person name="Rodriguez-Torres A.M."/>
            <person name="Rose M."/>
            <person name="Ruzzi M."/>
            <person name="Saliola M."/>
            <person name="Sanchez-Perez M."/>
            <person name="Schaefer B."/>
            <person name="Schaefer M."/>
            <person name="Scharfe M."/>
            <person name="Schmidheini T."/>
            <person name="Schreer A."/>
            <person name="Skala J."/>
            <person name="Souciet J.-L."/>
            <person name="Steensma H.Y."/>
            <person name="Talla E."/>
            <person name="Thierry A."/>
            <person name="Vandenbol M."/>
            <person name="van der Aart Q.J.M."/>
            <person name="Van Dyck L."/>
            <person name="Vanoni M."/>
            <person name="Verhasselt P."/>
            <person name="Voet M."/>
            <person name="Volckaert G."/>
            <person name="Wambutt R."/>
            <person name="Watson M.D."/>
            <person name="Weber N."/>
            <person name="Wedler E."/>
            <person name="Wedler H."/>
            <person name="Wipfli P."/>
            <person name="Wolf K."/>
            <person name="Wright L.F."/>
            <person name="Zaccaria P."/>
            <person name="Zimmermann M."/>
            <person name="Zollner A."/>
            <person name="Kleine K."/>
        </authorList>
    </citation>
    <scope>NUCLEOTIDE SEQUENCE [LARGE SCALE GENOMIC DNA]</scope>
    <source>
        <strain>ATCC 204508 / S288c</strain>
    </source>
</reference>
<reference key="2">
    <citation type="journal article" date="2014" name="G3 (Bethesda)">
        <title>The reference genome sequence of Saccharomyces cerevisiae: Then and now.</title>
        <authorList>
            <person name="Engel S.R."/>
            <person name="Dietrich F.S."/>
            <person name="Fisk D.G."/>
            <person name="Binkley G."/>
            <person name="Balakrishnan R."/>
            <person name="Costanzo M.C."/>
            <person name="Dwight S.S."/>
            <person name="Hitz B.C."/>
            <person name="Karra K."/>
            <person name="Nash R.S."/>
            <person name="Weng S."/>
            <person name="Wong E.D."/>
            <person name="Lloyd P."/>
            <person name="Skrzypek M.S."/>
            <person name="Miyasato S.R."/>
            <person name="Simison M."/>
            <person name="Cherry J.M."/>
        </authorList>
    </citation>
    <scope>GENOME REANNOTATION</scope>
    <source>
        <strain>ATCC 204508 / S288c</strain>
    </source>
</reference>
<reference key="3">
    <citation type="journal article" date="2002" name="Nat. Biotechnol.">
        <title>An integrated approach for finding overlooked genes in yeast.</title>
        <authorList>
            <person name="Kumar A."/>
            <person name="Harrison P.M."/>
            <person name="Cheung K.-H."/>
            <person name="Lan N."/>
            <person name="Echols N."/>
            <person name="Bertone P."/>
            <person name="Miller P."/>
            <person name="Gerstein M.B."/>
            <person name="Snyder M."/>
        </authorList>
    </citation>
    <scope>NUCLEOTIDE SEQUENCE [GENOMIC DNA]</scope>
</reference>
<sequence>MMFITSNINGRLIFVHDLVIFQKIKHFLNFCVVYFSQRASCCMDYAIFVFNLCFIPNLCVACIFNVATASIP</sequence>
<name>YG270_YEAST</name>
<feature type="chain" id="PRO_0000299924" description="Putative uncharacterized protein YGR270C-A">
    <location>
        <begin position="1"/>
        <end position="72"/>
    </location>
</feature>
<feature type="transmembrane region" description="Helical" evidence="1">
    <location>
        <begin position="46"/>
        <end position="66"/>
    </location>
</feature>
<dbReference type="EMBL" id="Z73055">
    <property type="status" value="NOT_ANNOTATED_CDS"/>
    <property type="molecule type" value="Genomic_DNA"/>
</dbReference>
<dbReference type="EMBL" id="AF479952">
    <property type="protein sequence ID" value="AAL79265.1"/>
    <property type="molecule type" value="Genomic_DNA"/>
</dbReference>
<dbReference type="PaxDb" id="4932-YGR270C-A"/>
<dbReference type="EnsemblFungi" id="YGR270C-A_mRNA">
    <property type="protein sequence ID" value="YGR270C-A"/>
    <property type="gene ID" value="YGR270C-A"/>
</dbReference>
<dbReference type="AGR" id="SGD:S000028641"/>
<dbReference type="SGD" id="S000028641">
    <property type="gene designation" value="YGR270C-A"/>
</dbReference>
<dbReference type="HOGENOM" id="CLU_2724150_0_0_1"/>
<dbReference type="GO" id="GO:0016020">
    <property type="term" value="C:membrane"/>
    <property type="evidence" value="ECO:0007669"/>
    <property type="project" value="UniProtKB-SubCell"/>
</dbReference>
<proteinExistence type="uncertain"/>
<comment type="subcellular location">
    <subcellularLocation>
        <location evidence="2">Membrane</location>
        <topology evidence="2">Single-pass membrane protein</topology>
    </subcellularLocation>
</comment>
<comment type="miscellaneous">
    <text evidence="2">Completely overlaps YTA7.</text>
</comment>
<comment type="caution">
    <text evidence="3">Product of a dubious gene prediction unlikely to encode a functional protein. Because of that it is not part of the S.cerevisiae S288c complete/reference proteome set.</text>
</comment>
<organism>
    <name type="scientific">Saccharomyces cerevisiae (strain ATCC 204508 / S288c)</name>
    <name type="common">Baker's yeast</name>
    <dbReference type="NCBI Taxonomy" id="559292"/>
    <lineage>
        <taxon>Eukaryota</taxon>
        <taxon>Fungi</taxon>
        <taxon>Dikarya</taxon>
        <taxon>Ascomycota</taxon>
        <taxon>Saccharomycotina</taxon>
        <taxon>Saccharomycetes</taxon>
        <taxon>Saccharomycetales</taxon>
        <taxon>Saccharomycetaceae</taxon>
        <taxon>Saccharomyces</taxon>
    </lineage>
</organism>
<keyword id="KW-0472">Membrane</keyword>
<keyword id="KW-0812">Transmembrane</keyword>
<keyword id="KW-1133">Transmembrane helix</keyword>
<evidence type="ECO:0000255" key="1"/>
<evidence type="ECO:0000305" key="2"/>
<evidence type="ECO:0000305" key="3">
    <source>
    </source>
</evidence>
<accession>Q8TGN7</accession>
<protein>
    <recommendedName>
        <fullName>Putative uncharacterized protein YGR270C-A</fullName>
    </recommendedName>
</protein>